<proteinExistence type="inferred from homology"/>
<evidence type="ECO:0000255" key="1">
    <source>
        <dbReference type="HAMAP-Rule" id="MF_00616"/>
    </source>
</evidence>
<dbReference type="EC" id="4.3.2.3" evidence="1"/>
<dbReference type="EMBL" id="CP001120">
    <property type="protein sequence ID" value="ACF66432.1"/>
    <property type="molecule type" value="Genomic_DNA"/>
</dbReference>
<dbReference type="RefSeq" id="WP_000764659.1">
    <property type="nucleotide sequence ID" value="NC_011083.1"/>
</dbReference>
<dbReference type="SMR" id="B4T9K8"/>
<dbReference type="KEGG" id="seh:SeHA_C0623"/>
<dbReference type="HOGENOM" id="CLU_070848_1_1_6"/>
<dbReference type="UniPathway" id="UPA00395"/>
<dbReference type="Proteomes" id="UP000001866">
    <property type="component" value="Chromosome"/>
</dbReference>
<dbReference type="GO" id="GO:0004848">
    <property type="term" value="F:ureidoglycolate hydrolase activity"/>
    <property type="evidence" value="ECO:0007669"/>
    <property type="project" value="InterPro"/>
</dbReference>
<dbReference type="GO" id="GO:0050385">
    <property type="term" value="F:ureidoglycolate lyase activity"/>
    <property type="evidence" value="ECO:0007669"/>
    <property type="project" value="UniProtKB-UniRule"/>
</dbReference>
<dbReference type="GO" id="GO:0000256">
    <property type="term" value="P:allantoin catabolic process"/>
    <property type="evidence" value="ECO:0007669"/>
    <property type="project" value="UniProtKB-UniRule"/>
</dbReference>
<dbReference type="GO" id="GO:0006145">
    <property type="term" value="P:purine nucleobase catabolic process"/>
    <property type="evidence" value="ECO:0007669"/>
    <property type="project" value="UniProtKB-UniRule"/>
</dbReference>
<dbReference type="CDD" id="cd20298">
    <property type="entry name" value="cupin_UAH"/>
    <property type="match status" value="1"/>
</dbReference>
<dbReference type="FunFam" id="2.60.120.480:FF:000001">
    <property type="entry name" value="Ureidoglycolate lyase"/>
    <property type="match status" value="1"/>
</dbReference>
<dbReference type="Gene3D" id="2.60.120.480">
    <property type="entry name" value="Ureidoglycolate hydrolase"/>
    <property type="match status" value="1"/>
</dbReference>
<dbReference type="HAMAP" id="MF_00616">
    <property type="entry name" value="Ureidogly_lyase"/>
    <property type="match status" value="1"/>
</dbReference>
<dbReference type="InterPro" id="IPR011051">
    <property type="entry name" value="RmlC_Cupin_sf"/>
</dbReference>
<dbReference type="InterPro" id="IPR047233">
    <property type="entry name" value="UAH_cupin"/>
</dbReference>
<dbReference type="InterPro" id="IPR007247">
    <property type="entry name" value="Ureidogly_lyase"/>
</dbReference>
<dbReference type="InterPro" id="IPR023525">
    <property type="entry name" value="Ureidogly_lyase_bac"/>
</dbReference>
<dbReference type="InterPro" id="IPR024060">
    <property type="entry name" value="Ureidoglycolate_lyase_dom_sf"/>
</dbReference>
<dbReference type="NCBIfam" id="NF002948">
    <property type="entry name" value="PRK03606.1-1"/>
    <property type="match status" value="1"/>
</dbReference>
<dbReference type="NCBIfam" id="NF009932">
    <property type="entry name" value="PRK13395.1"/>
    <property type="match status" value="1"/>
</dbReference>
<dbReference type="PANTHER" id="PTHR21221">
    <property type="entry name" value="UREIDOGLYCOLATE HYDROLASE"/>
    <property type="match status" value="1"/>
</dbReference>
<dbReference type="PANTHER" id="PTHR21221:SF1">
    <property type="entry name" value="UREIDOGLYCOLATE LYASE"/>
    <property type="match status" value="1"/>
</dbReference>
<dbReference type="Pfam" id="PF04115">
    <property type="entry name" value="Ureidogly_lyase"/>
    <property type="match status" value="1"/>
</dbReference>
<dbReference type="PIRSF" id="PIRSF017306">
    <property type="entry name" value="Ureidogly_hydro"/>
    <property type="match status" value="1"/>
</dbReference>
<dbReference type="SUPFAM" id="SSF51182">
    <property type="entry name" value="RmlC-like cupins"/>
    <property type="match status" value="1"/>
</dbReference>
<name>ALLA_SALHS</name>
<sequence length="160" mass="18124">MKLEVLPLDQKTFSAYGDVIETQERDFFHINNGLVERYHDLAKVEVLEQDRTLISINRAQPAAMPIVVHELERHPLGTQAFVPMNGEAFVVIVALGDDKPDLSTLRAFISNGRQGVNYHRNVWHHPLFAWQTVTDFLTVDRGGSDNCDVESIPTHELCFA</sequence>
<protein>
    <recommendedName>
        <fullName evidence="1">Ureidoglycolate lyase</fullName>
        <ecNumber evidence="1">4.3.2.3</ecNumber>
    </recommendedName>
    <alternativeName>
        <fullName evidence="1">Ureidoglycolatase</fullName>
    </alternativeName>
</protein>
<keyword id="KW-0456">Lyase</keyword>
<keyword id="KW-0659">Purine metabolism</keyword>
<gene>
    <name evidence="1" type="primary">allA</name>
    <name type="ordered locus">SeHA_C0623</name>
</gene>
<reference key="1">
    <citation type="journal article" date="2011" name="J. Bacteriol.">
        <title>Comparative genomics of 28 Salmonella enterica isolates: evidence for CRISPR-mediated adaptive sublineage evolution.</title>
        <authorList>
            <person name="Fricke W.F."/>
            <person name="Mammel M.K."/>
            <person name="McDermott P.F."/>
            <person name="Tartera C."/>
            <person name="White D.G."/>
            <person name="Leclerc J.E."/>
            <person name="Ravel J."/>
            <person name="Cebula T.A."/>
        </authorList>
    </citation>
    <scope>NUCLEOTIDE SEQUENCE [LARGE SCALE GENOMIC DNA]</scope>
    <source>
        <strain>SL476</strain>
    </source>
</reference>
<organism>
    <name type="scientific">Salmonella heidelberg (strain SL476)</name>
    <dbReference type="NCBI Taxonomy" id="454169"/>
    <lineage>
        <taxon>Bacteria</taxon>
        <taxon>Pseudomonadati</taxon>
        <taxon>Pseudomonadota</taxon>
        <taxon>Gammaproteobacteria</taxon>
        <taxon>Enterobacterales</taxon>
        <taxon>Enterobacteriaceae</taxon>
        <taxon>Salmonella</taxon>
    </lineage>
</organism>
<feature type="chain" id="PRO_1000130426" description="Ureidoglycolate lyase">
    <location>
        <begin position="1"/>
        <end position="160"/>
    </location>
</feature>
<accession>B4T9K8</accession>
<comment type="function">
    <text evidence="1">Catalyzes the catabolism of the allantoin degradation intermediate (S)-ureidoglycolate, generating urea and glyoxylate. Involved in the utilization of allantoin as nitrogen source.</text>
</comment>
<comment type="catalytic activity">
    <reaction evidence="1">
        <text>(S)-ureidoglycolate = urea + glyoxylate</text>
        <dbReference type="Rhea" id="RHEA:11304"/>
        <dbReference type="ChEBI" id="CHEBI:16199"/>
        <dbReference type="ChEBI" id="CHEBI:36655"/>
        <dbReference type="ChEBI" id="CHEBI:57296"/>
        <dbReference type="EC" id="4.3.2.3"/>
    </reaction>
</comment>
<comment type="cofactor">
    <cofactor evidence="1">
        <name>Ni(2+)</name>
        <dbReference type="ChEBI" id="CHEBI:49786"/>
    </cofactor>
</comment>
<comment type="pathway">
    <text evidence="1">Nitrogen metabolism; (S)-allantoin degradation.</text>
</comment>
<comment type="subunit">
    <text evidence="1">Homodimer.</text>
</comment>
<comment type="similarity">
    <text evidence="1">Belongs to the ureidoglycolate lyase family.</text>
</comment>